<protein>
    <recommendedName>
        <fullName evidence="1">Serine hydroxymethyltransferase 2</fullName>
        <shortName evidence="1">SHMT 2</shortName>
        <shortName evidence="1">Serine methylase 2</shortName>
        <ecNumber evidence="1">2.1.2.1</ecNumber>
    </recommendedName>
</protein>
<name>GLYA2_VIBPA</name>
<proteinExistence type="inferred from homology"/>
<feature type="chain" id="PRO_0000113693" description="Serine hydroxymethyltransferase 2">
    <location>
        <begin position="1"/>
        <end position="431"/>
    </location>
</feature>
<feature type="binding site" evidence="1">
    <location>
        <position position="131"/>
    </location>
    <ligand>
        <name>(6S)-5,6,7,8-tetrahydrofolate</name>
        <dbReference type="ChEBI" id="CHEBI:57453"/>
    </ligand>
</feature>
<feature type="binding site" evidence="1">
    <location>
        <begin position="135"/>
        <end position="137"/>
    </location>
    <ligand>
        <name>(6S)-5,6,7,8-tetrahydrofolate</name>
        <dbReference type="ChEBI" id="CHEBI:57453"/>
    </ligand>
</feature>
<feature type="site" description="Plays an important role in substrate specificity" evidence="1">
    <location>
        <position position="239"/>
    </location>
</feature>
<feature type="modified residue" description="N6-(pyridoxal phosphate)lysine" evidence="1">
    <location>
        <position position="240"/>
    </location>
</feature>
<reference key="1">
    <citation type="journal article" date="2003" name="Lancet">
        <title>Genome sequence of Vibrio parahaemolyticus: a pathogenic mechanism distinct from that of V. cholerae.</title>
        <authorList>
            <person name="Makino K."/>
            <person name="Oshima K."/>
            <person name="Kurokawa K."/>
            <person name="Yokoyama K."/>
            <person name="Uda T."/>
            <person name="Tagomori K."/>
            <person name="Iijima Y."/>
            <person name="Najima M."/>
            <person name="Nakano M."/>
            <person name="Yamashita A."/>
            <person name="Kubota Y."/>
            <person name="Kimura S."/>
            <person name="Yasunaga T."/>
            <person name="Honda T."/>
            <person name="Shinagawa H."/>
            <person name="Hattori M."/>
            <person name="Iida T."/>
        </authorList>
    </citation>
    <scope>NUCLEOTIDE SEQUENCE [LARGE SCALE GENOMIC DNA]</scope>
    <source>
        <strain>RIMD 2210633</strain>
    </source>
</reference>
<keyword id="KW-0028">Amino-acid biosynthesis</keyword>
<keyword id="KW-0963">Cytoplasm</keyword>
<keyword id="KW-0554">One-carbon metabolism</keyword>
<keyword id="KW-0663">Pyridoxal phosphate</keyword>
<keyword id="KW-0808">Transferase</keyword>
<gene>
    <name evidence="1" type="primary">glyA2</name>
    <name type="ordered locus">VPA0803</name>
</gene>
<comment type="function">
    <text evidence="1">Catalyzes the reversible interconversion of serine and glycine with tetrahydrofolate (THF) serving as the one-carbon carrier. This reaction serves as the major source of one-carbon groups required for the biosynthesis of purines, thymidylate, methionine, and other important biomolecules. Also exhibits THF-independent aldolase activity toward beta-hydroxyamino acids, producing glycine and aldehydes, via a retro-aldol mechanism.</text>
</comment>
<comment type="catalytic activity">
    <reaction evidence="1">
        <text>(6R)-5,10-methylene-5,6,7,8-tetrahydrofolate + glycine + H2O = (6S)-5,6,7,8-tetrahydrofolate + L-serine</text>
        <dbReference type="Rhea" id="RHEA:15481"/>
        <dbReference type="ChEBI" id="CHEBI:15377"/>
        <dbReference type="ChEBI" id="CHEBI:15636"/>
        <dbReference type="ChEBI" id="CHEBI:33384"/>
        <dbReference type="ChEBI" id="CHEBI:57305"/>
        <dbReference type="ChEBI" id="CHEBI:57453"/>
        <dbReference type="EC" id="2.1.2.1"/>
    </reaction>
</comment>
<comment type="cofactor">
    <cofactor evidence="1">
        <name>pyridoxal 5'-phosphate</name>
        <dbReference type="ChEBI" id="CHEBI:597326"/>
    </cofactor>
</comment>
<comment type="pathway">
    <text evidence="1">One-carbon metabolism; tetrahydrofolate interconversion.</text>
</comment>
<comment type="pathway">
    <text evidence="1">Amino-acid biosynthesis; glycine biosynthesis; glycine from L-serine: step 1/1.</text>
</comment>
<comment type="subunit">
    <text evidence="1">Homodimer.</text>
</comment>
<comment type="subcellular location">
    <subcellularLocation>
        <location evidence="1">Cytoplasm</location>
    </subcellularLocation>
</comment>
<comment type="similarity">
    <text evidence="1">Belongs to the SHMT family.</text>
</comment>
<sequence>MNKSYPNHSLENFFSTNLSATDDAVFAGIQAEFTRQNEQIELIASENIVSKAVMQAQGTCLTNKYAEGYPGRRYYGGCEHVDTVEAIAIERAKKLFNCEYANVQPHSGAQANGAVKLALLQPGDTILGMSLDAGGHLTHGARPALSGKWFNAVQYGVDRETLEINYDDVRALALEHKPKMIIAGGSAIPRTIDFAKFREIADEVNAILMVDMAHIAGLIATGAHPSPLPHAHVVTTTTHKTLRGPRGGMILTNHEDIIKKINSAVFPGLQGGPLMHVIAAKAVAFGEALGPEFKTYIDSVINNAKVLAEVLQTRGCDIVTGGTDTHLMLVDLRPKGLKGNKAEEALERAGITCNKNGIPFDTEKPMITSGIRLGTPAGTSRGFGAEEFKLIGNWIGDVLDGLVNNPEGDAIVEKRVRKEVKELCSRFPLYQ</sequence>
<accession>Q87I03</accession>
<organism>
    <name type="scientific">Vibrio parahaemolyticus serotype O3:K6 (strain RIMD 2210633)</name>
    <dbReference type="NCBI Taxonomy" id="223926"/>
    <lineage>
        <taxon>Bacteria</taxon>
        <taxon>Pseudomonadati</taxon>
        <taxon>Pseudomonadota</taxon>
        <taxon>Gammaproteobacteria</taxon>
        <taxon>Vibrionales</taxon>
        <taxon>Vibrionaceae</taxon>
        <taxon>Vibrio</taxon>
    </lineage>
</organism>
<evidence type="ECO:0000255" key="1">
    <source>
        <dbReference type="HAMAP-Rule" id="MF_00051"/>
    </source>
</evidence>
<dbReference type="EC" id="2.1.2.1" evidence="1"/>
<dbReference type="EMBL" id="BA000032">
    <property type="protein sequence ID" value="BAC62146.1"/>
    <property type="molecule type" value="Genomic_DNA"/>
</dbReference>
<dbReference type="RefSeq" id="NP_800313.1">
    <property type="nucleotide sequence ID" value="NC_004605.1"/>
</dbReference>
<dbReference type="RefSeq" id="WP_005478453.1">
    <property type="nucleotide sequence ID" value="NC_004605.1"/>
</dbReference>
<dbReference type="SMR" id="Q87I03"/>
<dbReference type="GeneID" id="1191492"/>
<dbReference type="KEGG" id="vpa:VPA0803"/>
<dbReference type="PATRIC" id="fig|223926.6.peg.3734"/>
<dbReference type="eggNOG" id="COG0112">
    <property type="taxonomic scope" value="Bacteria"/>
</dbReference>
<dbReference type="HOGENOM" id="CLU_022477_2_1_6"/>
<dbReference type="UniPathway" id="UPA00193"/>
<dbReference type="UniPathway" id="UPA00288">
    <property type="reaction ID" value="UER01023"/>
</dbReference>
<dbReference type="Proteomes" id="UP000002493">
    <property type="component" value="Chromosome 2"/>
</dbReference>
<dbReference type="GO" id="GO:0005829">
    <property type="term" value="C:cytosol"/>
    <property type="evidence" value="ECO:0007669"/>
    <property type="project" value="TreeGrafter"/>
</dbReference>
<dbReference type="GO" id="GO:0004372">
    <property type="term" value="F:glycine hydroxymethyltransferase activity"/>
    <property type="evidence" value="ECO:0007669"/>
    <property type="project" value="UniProtKB-UniRule"/>
</dbReference>
<dbReference type="GO" id="GO:0030170">
    <property type="term" value="F:pyridoxal phosphate binding"/>
    <property type="evidence" value="ECO:0007669"/>
    <property type="project" value="UniProtKB-UniRule"/>
</dbReference>
<dbReference type="GO" id="GO:0019264">
    <property type="term" value="P:glycine biosynthetic process from serine"/>
    <property type="evidence" value="ECO:0007669"/>
    <property type="project" value="UniProtKB-UniRule"/>
</dbReference>
<dbReference type="GO" id="GO:0035999">
    <property type="term" value="P:tetrahydrofolate interconversion"/>
    <property type="evidence" value="ECO:0007669"/>
    <property type="project" value="UniProtKB-UniRule"/>
</dbReference>
<dbReference type="CDD" id="cd00378">
    <property type="entry name" value="SHMT"/>
    <property type="match status" value="1"/>
</dbReference>
<dbReference type="FunFam" id="3.40.640.10:FF:000001">
    <property type="entry name" value="Serine hydroxymethyltransferase"/>
    <property type="match status" value="1"/>
</dbReference>
<dbReference type="FunFam" id="3.90.1150.10:FF:000003">
    <property type="entry name" value="Serine hydroxymethyltransferase"/>
    <property type="match status" value="1"/>
</dbReference>
<dbReference type="Gene3D" id="3.90.1150.10">
    <property type="entry name" value="Aspartate Aminotransferase, domain 1"/>
    <property type="match status" value="1"/>
</dbReference>
<dbReference type="Gene3D" id="3.40.640.10">
    <property type="entry name" value="Type I PLP-dependent aspartate aminotransferase-like (Major domain)"/>
    <property type="match status" value="1"/>
</dbReference>
<dbReference type="HAMAP" id="MF_00051">
    <property type="entry name" value="SHMT"/>
    <property type="match status" value="1"/>
</dbReference>
<dbReference type="InterPro" id="IPR015424">
    <property type="entry name" value="PyrdxlP-dep_Trfase"/>
</dbReference>
<dbReference type="InterPro" id="IPR015421">
    <property type="entry name" value="PyrdxlP-dep_Trfase_major"/>
</dbReference>
<dbReference type="InterPro" id="IPR015422">
    <property type="entry name" value="PyrdxlP-dep_Trfase_small"/>
</dbReference>
<dbReference type="InterPro" id="IPR001085">
    <property type="entry name" value="Ser_HO-MeTrfase"/>
</dbReference>
<dbReference type="InterPro" id="IPR049943">
    <property type="entry name" value="Ser_HO-MeTrfase-like"/>
</dbReference>
<dbReference type="InterPro" id="IPR019798">
    <property type="entry name" value="Ser_HO-MeTrfase_PLP_BS"/>
</dbReference>
<dbReference type="InterPro" id="IPR039429">
    <property type="entry name" value="SHMT-like_dom"/>
</dbReference>
<dbReference type="NCBIfam" id="NF000586">
    <property type="entry name" value="PRK00011.1"/>
    <property type="match status" value="1"/>
</dbReference>
<dbReference type="PANTHER" id="PTHR11680">
    <property type="entry name" value="SERINE HYDROXYMETHYLTRANSFERASE"/>
    <property type="match status" value="1"/>
</dbReference>
<dbReference type="PANTHER" id="PTHR11680:SF35">
    <property type="entry name" value="SERINE HYDROXYMETHYLTRANSFERASE 1"/>
    <property type="match status" value="1"/>
</dbReference>
<dbReference type="Pfam" id="PF00464">
    <property type="entry name" value="SHMT"/>
    <property type="match status" value="1"/>
</dbReference>
<dbReference type="PIRSF" id="PIRSF000412">
    <property type="entry name" value="SHMT"/>
    <property type="match status" value="1"/>
</dbReference>
<dbReference type="SUPFAM" id="SSF53383">
    <property type="entry name" value="PLP-dependent transferases"/>
    <property type="match status" value="1"/>
</dbReference>
<dbReference type="PROSITE" id="PS00096">
    <property type="entry name" value="SHMT"/>
    <property type="match status" value="1"/>
</dbReference>